<name>CYAY_VIBVY</name>
<organism>
    <name type="scientific">Vibrio vulnificus (strain YJ016)</name>
    <dbReference type="NCBI Taxonomy" id="196600"/>
    <lineage>
        <taxon>Bacteria</taxon>
        <taxon>Pseudomonadati</taxon>
        <taxon>Pseudomonadota</taxon>
        <taxon>Gammaproteobacteria</taxon>
        <taxon>Vibrionales</taxon>
        <taxon>Vibrionaceae</taxon>
        <taxon>Vibrio</taxon>
    </lineage>
</organism>
<dbReference type="EMBL" id="BA000037">
    <property type="protein sequence ID" value="BAC92848.1"/>
    <property type="molecule type" value="Genomic_DNA"/>
</dbReference>
<dbReference type="RefSeq" id="WP_011079140.1">
    <property type="nucleotide sequence ID" value="NC_005139.1"/>
</dbReference>
<dbReference type="SMR" id="Q7MQC4"/>
<dbReference type="STRING" id="672.VV93_v1c00750"/>
<dbReference type="GeneID" id="93895403"/>
<dbReference type="KEGG" id="vvy:VV0085"/>
<dbReference type="eggNOG" id="COG1965">
    <property type="taxonomic scope" value="Bacteria"/>
</dbReference>
<dbReference type="HOGENOM" id="CLU_080880_3_0_6"/>
<dbReference type="Proteomes" id="UP000002675">
    <property type="component" value="Chromosome I"/>
</dbReference>
<dbReference type="GO" id="GO:0005829">
    <property type="term" value="C:cytosol"/>
    <property type="evidence" value="ECO:0007669"/>
    <property type="project" value="TreeGrafter"/>
</dbReference>
<dbReference type="GO" id="GO:0008199">
    <property type="term" value="F:ferric iron binding"/>
    <property type="evidence" value="ECO:0007669"/>
    <property type="project" value="InterPro"/>
</dbReference>
<dbReference type="GO" id="GO:0008198">
    <property type="term" value="F:ferrous iron binding"/>
    <property type="evidence" value="ECO:0007669"/>
    <property type="project" value="TreeGrafter"/>
</dbReference>
<dbReference type="GO" id="GO:0016226">
    <property type="term" value="P:iron-sulfur cluster assembly"/>
    <property type="evidence" value="ECO:0007669"/>
    <property type="project" value="UniProtKB-UniRule"/>
</dbReference>
<dbReference type="CDD" id="cd00503">
    <property type="entry name" value="Frataxin"/>
    <property type="match status" value="1"/>
</dbReference>
<dbReference type="Gene3D" id="3.30.920.10">
    <property type="entry name" value="Frataxin/CyaY"/>
    <property type="match status" value="1"/>
</dbReference>
<dbReference type="HAMAP" id="MF_00142">
    <property type="entry name" value="CyaY"/>
    <property type="match status" value="1"/>
</dbReference>
<dbReference type="InterPro" id="IPR047584">
    <property type="entry name" value="CyaY"/>
</dbReference>
<dbReference type="InterPro" id="IPR002908">
    <property type="entry name" value="Frataxin/CyaY"/>
</dbReference>
<dbReference type="InterPro" id="IPR036524">
    <property type="entry name" value="Frataxin/CyaY_sf"/>
</dbReference>
<dbReference type="InterPro" id="IPR020895">
    <property type="entry name" value="Frataxin_CS"/>
</dbReference>
<dbReference type="NCBIfam" id="TIGR03421">
    <property type="entry name" value="FeS_CyaY"/>
    <property type="match status" value="1"/>
</dbReference>
<dbReference type="PANTHER" id="PTHR16821">
    <property type="entry name" value="FRATAXIN"/>
    <property type="match status" value="1"/>
</dbReference>
<dbReference type="PANTHER" id="PTHR16821:SF2">
    <property type="entry name" value="FRATAXIN, MITOCHONDRIAL"/>
    <property type="match status" value="1"/>
</dbReference>
<dbReference type="Pfam" id="PF01491">
    <property type="entry name" value="Frataxin_Cyay"/>
    <property type="match status" value="1"/>
</dbReference>
<dbReference type="SMART" id="SM01219">
    <property type="entry name" value="Frataxin_Cyay"/>
    <property type="match status" value="1"/>
</dbReference>
<dbReference type="SUPFAM" id="SSF55387">
    <property type="entry name" value="Frataxin/Nqo15-like"/>
    <property type="match status" value="1"/>
</dbReference>
<dbReference type="PROSITE" id="PS01344">
    <property type="entry name" value="FRATAXIN_1"/>
    <property type="match status" value="1"/>
</dbReference>
<dbReference type="PROSITE" id="PS50810">
    <property type="entry name" value="FRATAXIN_2"/>
    <property type="match status" value="1"/>
</dbReference>
<protein>
    <recommendedName>
        <fullName evidence="1">Iron-sulfur cluster assembly protein CyaY</fullName>
    </recommendedName>
</protein>
<feature type="chain" id="PRO_0000193968" description="Iron-sulfur cluster assembly protein CyaY">
    <location>
        <begin position="1"/>
        <end position="104"/>
    </location>
</feature>
<proteinExistence type="inferred from homology"/>
<evidence type="ECO:0000255" key="1">
    <source>
        <dbReference type="HAMAP-Rule" id="MF_00142"/>
    </source>
</evidence>
<comment type="function">
    <text evidence="1">Involved in iron-sulfur (Fe-S) cluster assembly. May act as a regulator of Fe-S biogenesis.</text>
</comment>
<comment type="similarity">
    <text evidence="1">Belongs to the frataxin family.</text>
</comment>
<sequence length="104" mass="11954">MNNTEFHQLVDNELQLIEEAIDESGADIDYETTGNVMTLEFDDRSQIIINRQEPMQEIWLASKSGGFHFQYKAGQWICSKTGVEFAHMVKQECEKHAGESIDWA</sequence>
<reference key="1">
    <citation type="journal article" date="2003" name="Genome Res.">
        <title>Comparative genome analysis of Vibrio vulnificus, a marine pathogen.</title>
        <authorList>
            <person name="Chen C.-Y."/>
            <person name="Wu K.-M."/>
            <person name="Chang Y.-C."/>
            <person name="Chang C.-H."/>
            <person name="Tsai H.-C."/>
            <person name="Liao T.-L."/>
            <person name="Liu Y.-M."/>
            <person name="Chen H.-J."/>
            <person name="Shen A.B.-T."/>
            <person name="Li J.-C."/>
            <person name="Su T.-L."/>
            <person name="Shao C.-P."/>
            <person name="Lee C.-T."/>
            <person name="Hor L.-I."/>
            <person name="Tsai S.-F."/>
        </authorList>
    </citation>
    <scope>NUCLEOTIDE SEQUENCE [LARGE SCALE GENOMIC DNA]</scope>
    <source>
        <strain>YJ016</strain>
    </source>
</reference>
<gene>
    <name evidence="1" type="primary">cyaY</name>
    <name type="ordered locus">VV0085</name>
</gene>
<accession>Q7MQC4</accession>
<keyword id="KW-0408">Iron</keyword>
<keyword id="KW-0479">Metal-binding</keyword>